<dbReference type="EC" id="7.1.1.9"/>
<dbReference type="EMBL" id="L04272">
    <property type="protein sequence ID" value="AAA93541.1"/>
    <property type="molecule type" value="Genomic_DNA"/>
</dbReference>
<dbReference type="SMR" id="P33504"/>
<dbReference type="UniPathway" id="UPA00705"/>
<dbReference type="GO" id="GO:0005743">
    <property type="term" value="C:mitochondrial inner membrane"/>
    <property type="evidence" value="ECO:0007669"/>
    <property type="project" value="UniProtKB-SubCell"/>
</dbReference>
<dbReference type="GO" id="GO:0045277">
    <property type="term" value="C:respiratory chain complex IV"/>
    <property type="evidence" value="ECO:0007669"/>
    <property type="project" value="InterPro"/>
</dbReference>
<dbReference type="GO" id="GO:0004129">
    <property type="term" value="F:cytochrome-c oxidase activity"/>
    <property type="evidence" value="ECO:0007669"/>
    <property type="project" value="UniProtKB-EC"/>
</dbReference>
<dbReference type="GO" id="GO:0020037">
    <property type="term" value="F:heme binding"/>
    <property type="evidence" value="ECO:0007669"/>
    <property type="project" value="InterPro"/>
</dbReference>
<dbReference type="GO" id="GO:0046872">
    <property type="term" value="F:metal ion binding"/>
    <property type="evidence" value="ECO:0007669"/>
    <property type="project" value="UniProtKB-KW"/>
</dbReference>
<dbReference type="GO" id="GO:0015990">
    <property type="term" value="P:electron transport coupled proton transport"/>
    <property type="evidence" value="ECO:0007669"/>
    <property type="project" value="TreeGrafter"/>
</dbReference>
<dbReference type="GO" id="GO:0006123">
    <property type="term" value="P:mitochondrial electron transport, cytochrome c to oxygen"/>
    <property type="evidence" value="ECO:0007669"/>
    <property type="project" value="TreeGrafter"/>
</dbReference>
<dbReference type="CDD" id="cd01663">
    <property type="entry name" value="Cyt_c_Oxidase_I"/>
    <property type="match status" value="1"/>
</dbReference>
<dbReference type="FunFam" id="1.20.210.10:FF:000001">
    <property type="entry name" value="Cytochrome c oxidase subunit 1"/>
    <property type="match status" value="1"/>
</dbReference>
<dbReference type="Gene3D" id="1.20.210.10">
    <property type="entry name" value="Cytochrome c oxidase-like, subunit I domain"/>
    <property type="match status" value="1"/>
</dbReference>
<dbReference type="InterPro" id="IPR023616">
    <property type="entry name" value="Cyt_c_oxase-like_su1_dom"/>
</dbReference>
<dbReference type="InterPro" id="IPR036927">
    <property type="entry name" value="Cyt_c_oxase-like_su1_sf"/>
</dbReference>
<dbReference type="InterPro" id="IPR000883">
    <property type="entry name" value="Cyt_C_Oxase_1"/>
</dbReference>
<dbReference type="InterPro" id="IPR023615">
    <property type="entry name" value="Cyt_c_Oxase_su1_BS"/>
</dbReference>
<dbReference type="InterPro" id="IPR033944">
    <property type="entry name" value="Cyt_c_oxase_su1_dom"/>
</dbReference>
<dbReference type="PANTHER" id="PTHR10422">
    <property type="entry name" value="CYTOCHROME C OXIDASE SUBUNIT 1"/>
    <property type="match status" value="1"/>
</dbReference>
<dbReference type="PANTHER" id="PTHR10422:SF18">
    <property type="entry name" value="CYTOCHROME C OXIDASE SUBUNIT 1"/>
    <property type="match status" value="1"/>
</dbReference>
<dbReference type="Pfam" id="PF00115">
    <property type="entry name" value="COX1"/>
    <property type="match status" value="1"/>
</dbReference>
<dbReference type="PRINTS" id="PR01165">
    <property type="entry name" value="CYCOXIDASEI"/>
</dbReference>
<dbReference type="SUPFAM" id="SSF81442">
    <property type="entry name" value="Cytochrome c oxidase subunit I-like"/>
    <property type="match status" value="1"/>
</dbReference>
<dbReference type="PROSITE" id="PS50855">
    <property type="entry name" value="COX1"/>
    <property type="match status" value="1"/>
</dbReference>
<dbReference type="PROSITE" id="PS00077">
    <property type="entry name" value="COX1_CUB"/>
    <property type="match status" value="1"/>
</dbReference>
<geneLocation type="mitochondrion"/>
<proteinExistence type="inferred from homology"/>
<gene>
    <name type="primary">COI</name>
</gene>
<feature type="chain" id="PRO_0000183283" description="Cytochrome c oxidase subunit 1">
    <location>
        <begin position="1"/>
        <end position="514"/>
    </location>
</feature>
<feature type="transmembrane region" description="Helical" evidence="3">
    <location>
        <begin position="16"/>
        <end position="36"/>
    </location>
</feature>
<feature type="transmembrane region" description="Helical" evidence="3">
    <location>
        <begin position="55"/>
        <end position="75"/>
    </location>
</feature>
<feature type="transmembrane region" description="Helical" evidence="3">
    <location>
        <begin position="101"/>
        <end position="121"/>
    </location>
</feature>
<feature type="transmembrane region" description="Helical" evidence="3">
    <location>
        <begin position="144"/>
        <end position="164"/>
    </location>
</feature>
<feature type="transmembrane region" description="Helical" evidence="3">
    <location>
        <begin position="182"/>
        <end position="202"/>
    </location>
</feature>
<feature type="transmembrane region" description="Helical" evidence="3">
    <location>
        <begin position="233"/>
        <end position="253"/>
    </location>
</feature>
<feature type="transmembrane region" description="Helical" evidence="3">
    <location>
        <begin position="267"/>
        <end position="287"/>
    </location>
</feature>
<feature type="transmembrane region" description="Helical" evidence="3">
    <location>
        <begin position="304"/>
        <end position="324"/>
    </location>
</feature>
<feature type="transmembrane region" description="Helical" evidence="3">
    <location>
        <begin position="337"/>
        <end position="357"/>
    </location>
</feature>
<feature type="transmembrane region" description="Helical" evidence="3">
    <location>
        <begin position="379"/>
        <end position="399"/>
    </location>
</feature>
<feature type="transmembrane region" description="Helical" evidence="3">
    <location>
        <begin position="413"/>
        <end position="433"/>
    </location>
</feature>
<feature type="transmembrane region" description="Helical" evidence="3">
    <location>
        <begin position="451"/>
        <end position="471"/>
    </location>
</feature>
<feature type="binding site" evidence="2">
    <location>
        <position position="39"/>
    </location>
    <ligand>
        <name>Ca(2+)</name>
        <dbReference type="ChEBI" id="CHEBI:29108"/>
    </ligand>
</feature>
<feature type="binding site" evidence="2">
    <location>
        <position position="44"/>
    </location>
    <ligand>
        <name>Ca(2+)</name>
        <dbReference type="ChEBI" id="CHEBI:29108"/>
    </ligand>
</feature>
<feature type="binding site" description="axial binding residue" evidence="2">
    <location>
        <position position="60"/>
    </location>
    <ligand>
        <name>Fe(II)-heme a</name>
        <dbReference type="ChEBI" id="CHEBI:61715"/>
        <note>low-spin</note>
    </ligand>
    <ligandPart>
        <name>Fe</name>
        <dbReference type="ChEBI" id="CHEBI:18248"/>
    </ligandPart>
</feature>
<feature type="binding site" evidence="2">
    <location>
        <position position="239"/>
    </location>
    <ligand>
        <name>Cu cation</name>
        <dbReference type="ChEBI" id="CHEBI:23378"/>
        <label>B</label>
    </ligand>
</feature>
<feature type="binding site" evidence="1">
    <location>
        <position position="243"/>
    </location>
    <ligand>
        <name>O2</name>
        <dbReference type="ChEBI" id="CHEBI:15379"/>
    </ligand>
</feature>
<feature type="binding site" evidence="2">
    <location>
        <position position="289"/>
    </location>
    <ligand>
        <name>Cu cation</name>
        <dbReference type="ChEBI" id="CHEBI:23378"/>
        <label>B</label>
    </ligand>
</feature>
<feature type="binding site" evidence="2">
    <location>
        <position position="290"/>
    </location>
    <ligand>
        <name>Cu cation</name>
        <dbReference type="ChEBI" id="CHEBI:23378"/>
        <label>B</label>
    </ligand>
</feature>
<feature type="binding site" evidence="2">
    <location>
        <position position="367"/>
    </location>
    <ligand>
        <name>Mg(2+)</name>
        <dbReference type="ChEBI" id="CHEBI:18420"/>
        <note>ligand shared with subunit 2</note>
    </ligand>
</feature>
<feature type="binding site" evidence="2">
    <location>
        <position position="368"/>
    </location>
    <ligand>
        <name>Mg(2+)</name>
        <dbReference type="ChEBI" id="CHEBI:18420"/>
        <note>ligand shared with subunit 2</note>
    </ligand>
</feature>
<feature type="binding site" description="axial binding residue" evidence="2">
    <location>
        <position position="375"/>
    </location>
    <ligand>
        <name>heme a3</name>
        <dbReference type="ChEBI" id="CHEBI:83282"/>
        <note>high-spin</note>
    </ligand>
    <ligandPart>
        <name>Fe</name>
        <dbReference type="ChEBI" id="CHEBI:18248"/>
    </ligandPart>
</feature>
<feature type="binding site" description="axial binding residue" evidence="2">
    <location>
        <position position="377"/>
    </location>
    <ligand>
        <name>Fe(II)-heme a</name>
        <dbReference type="ChEBI" id="CHEBI:61715"/>
        <note>low-spin</note>
    </ligand>
    <ligandPart>
        <name>Fe</name>
        <dbReference type="ChEBI" id="CHEBI:18248"/>
    </ligandPart>
</feature>
<feature type="cross-link" description="1'-histidyl-3'-tyrosine (His-Tyr)" evidence="2">
    <location>
        <begin position="239"/>
        <end position="243"/>
    </location>
</feature>
<keyword id="KW-0106">Calcium</keyword>
<keyword id="KW-0186">Copper</keyword>
<keyword id="KW-0249">Electron transport</keyword>
<keyword id="KW-0349">Heme</keyword>
<keyword id="KW-0408">Iron</keyword>
<keyword id="KW-0460">Magnesium</keyword>
<keyword id="KW-0472">Membrane</keyword>
<keyword id="KW-0479">Metal-binding</keyword>
<keyword id="KW-0496">Mitochondrion</keyword>
<keyword id="KW-0999">Mitochondrion inner membrane</keyword>
<keyword id="KW-0679">Respiratory chain</keyword>
<keyword id="KW-1278">Translocase</keyword>
<keyword id="KW-0812">Transmembrane</keyword>
<keyword id="KW-1133">Transmembrane helix</keyword>
<keyword id="KW-0813">Transport</keyword>
<comment type="function">
    <text evidence="2">Component of the cytochrome c oxidase, the last enzyme in the mitochondrial electron transport chain which drives oxidative phosphorylation. The respiratory chain contains 3 multisubunit complexes succinate dehydrogenase (complex II, CII), ubiquinol-cytochrome c oxidoreductase (cytochrome b-c1 complex, complex III, CIII) and cytochrome c oxidase (complex IV, CIV), that cooperate to transfer electrons derived from NADH and succinate to molecular oxygen, creating an electrochemical gradient over the inner membrane that drives transmembrane transport and the ATP synthase. Cytochrome c oxidase is the component of the respiratory chain that catalyzes the reduction of oxygen to water. Electrons originating from reduced cytochrome c in the intermembrane space (IMS) are transferred via the dinuclear copper A center (CU(A)) of subunit 2 and heme A of subunit 1 to the active site in subunit 1, a binuclear center (BNC) formed by heme A3 and copper B (CU(B)). The BNC reduces molecular oxygen to 2 water molecules using 4 electrons from cytochrome c in the IMS and 4 protons from the mitochondrial matrix.</text>
</comment>
<comment type="catalytic activity">
    <reaction evidence="2">
        <text>4 Fe(II)-[cytochrome c] + O2 + 8 H(+)(in) = 4 Fe(III)-[cytochrome c] + 2 H2O + 4 H(+)(out)</text>
        <dbReference type="Rhea" id="RHEA:11436"/>
        <dbReference type="Rhea" id="RHEA-COMP:10350"/>
        <dbReference type="Rhea" id="RHEA-COMP:14399"/>
        <dbReference type="ChEBI" id="CHEBI:15377"/>
        <dbReference type="ChEBI" id="CHEBI:15378"/>
        <dbReference type="ChEBI" id="CHEBI:15379"/>
        <dbReference type="ChEBI" id="CHEBI:29033"/>
        <dbReference type="ChEBI" id="CHEBI:29034"/>
        <dbReference type="EC" id="7.1.1.9"/>
    </reaction>
    <physiologicalReaction direction="left-to-right" evidence="2">
        <dbReference type="Rhea" id="RHEA:11437"/>
    </physiologicalReaction>
</comment>
<comment type="cofactor">
    <cofactor evidence="2">
        <name>heme</name>
        <dbReference type="ChEBI" id="CHEBI:30413"/>
    </cofactor>
    <text evidence="2">Binds 2 heme A groups non-covalently per subunit.</text>
</comment>
<comment type="cofactor">
    <cofactor evidence="2">
        <name>Cu cation</name>
        <dbReference type="ChEBI" id="CHEBI:23378"/>
    </cofactor>
    <text evidence="2">Binds a copper B center.</text>
</comment>
<comment type="pathway">
    <text evidence="2">Energy metabolism; oxidative phosphorylation.</text>
</comment>
<comment type="subunit">
    <text evidence="2">Component of the cytochrome c oxidase (complex IV, CIV), a multisubunit enzyme composed of a catalytic core of 3 subunits and several supernumerary subunits. The complex exists as a monomer or a dimer and forms supercomplexes (SCs) in the inner mitochondrial membrane with ubiquinol-cytochrome c oxidoreductase (cytochrome b-c1 complex, complex III, CIII).</text>
</comment>
<comment type="subcellular location">
    <subcellularLocation>
        <location evidence="2">Mitochondrion inner membrane</location>
        <topology evidence="2">Multi-pass membrane protein</topology>
    </subcellularLocation>
</comment>
<comment type="similarity">
    <text evidence="4">Belongs to the heme-copper respiratory oxidase family.</text>
</comment>
<accession>P33504</accession>
<name>COX1_ANOQU</name>
<organism>
    <name type="scientific">Anopheles quadrimaculatus</name>
    <name type="common">Common malaria mosquito</name>
    <dbReference type="NCBI Taxonomy" id="7166"/>
    <lineage>
        <taxon>Eukaryota</taxon>
        <taxon>Metazoa</taxon>
        <taxon>Ecdysozoa</taxon>
        <taxon>Arthropoda</taxon>
        <taxon>Hexapoda</taxon>
        <taxon>Insecta</taxon>
        <taxon>Pterygota</taxon>
        <taxon>Neoptera</taxon>
        <taxon>Endopterygota</taxon>
        <taxon>Diptera</taxon>
        <taxon>Nematocera</taxon>
        <taxon>Culicoidea</taxon>
        <taxon>Culicidae</taxon>
        <taxon>Anophelinae</taxon>
        <taxon>Anopheles</taxon>
    </lineage>
</organism>
<protein>
    <recommendedName>
        <fullName>Cytochrome c oxidase subunit 1</fullName>
        <ecNumber>7.1.1.9</ecNumber>
    </recommendedName>
    <alternativeName>
        <fullName>Cytochrome c oxidase polypeptide I</fullName>
    </alternativeName>
</protein>
<evidence type="ECO:0000250" key="1">
    <source>
        <dbReference type="UniProtKB" id="P00396"/>
    </source>
</evidence>
<evidence type="ECO:0000250" key="2">
    <source>
        <dbReference type="UniProtKB" id="P00401"/>
    </source>
</evidence>
<evidence type="ECO:0000255" key="3"/>
<evidence type="ECO:0000305" key="4"/>
<reference key="1">
    <citation type="journal article" date="1990" name="Arch. Insect Biochem. Physiol.">
        <title>Cloning of the mitochondrial genome of Anopheles quadrimaculatus.</title>
        <authorList>
            <person name="Cockburn A.F."/>
            <person name="Mitchell S.E."/>
            <person name="Seawright J.A."/>
        </authorList>
    </citation>
    <scope>NUCLEOTIDE SEQUENCE [GENOMIC DNA]</scope>
    <source>
        <strain>Orlando</strain>
    </source>
</reference>
<sequence>MSRQWLFSTNHKDIGTLYFIFGAWAGMVGTSLSILIRAELGHPGAFIGDDQIYNVIVTAHAFIMIFFMVMPIMIGGFGNWLVPLMLGAPDMAFPRMNNMSFWMLPPSLTLLISSSMVENGAGTGWTVYPPLSSGIAHAGASVDLAIFSLHLAGISSILGAVNFITTVINMRAPGITLDRMPLFVWSVVITAVLLLLSLPVLAGAITMLLTDRNLNTSFFDPAGGGEPNLYQHLFWFFGHPEVYILILPGFGMISHIITQESGKKETFGNLGMIYAMLAIGLLGFIVWAHHMFTVGMDVDTRAYFTSATMIIAVPTGIKIFSWLATMHGTQLTYSPAMLWAFGFVFLFTVGGLTGVVLANSSIDIVLHDTYYVVAHFHYVLSMGAVFAIMAGFIHWYPLLTGLTMNPNWLKLQFAMMFVGVNLTFFPQHFLGLAGMPRRYSDFPDSYLAWNIVSSLGSTISLFAILYFLFIIWESMITQRTPAFPMQLSSSIEWYHTLPPAEHTYAELPLLTNNF</sequence>